<sequence length="227" mass="25627">MGQKVNPVGMRIGITRDWTSNWYADKKDFADRLNEDLNVRQLLQKRLKGAAVSRIQIERPARNAKIIIHSARPGVIIGKKGGEIEALRDEIFKVMKVPVHITIEEVRKPELDAKLVAENIAQQLERRVMFRRAMKRAVQNTLRQGALGVKISVSGRLGGAEIARTEWYREGRVPLHTFRADIDYATASAKTTYGIIGVKVWIFKGEVHAPKPQAEEAAPQETEEEVK</sequence>
<accession>O85388</accession>
<organism>
    <name type="scientific">Coxiella burnetii (strain RSA 493 / Nine Mile phase I)</name>
    <dbReference type="NCBI Taxonomy" id="227377"/>
    <lineage>
        <taxon>Bacteria</taxon>
        <taxon>Pseudomonadati</taxon>
        <taxon>Pseudomonadota</taxon>
        <taxon>Gammaproteobacteria</taxon>
        <taxon>Legionellales</taxon>
        <taxon>Coxiellaceae</taxon>
        <taxon>Coxiella</taxon>
    </lineage>
</organism>
<gene>
    <name type="primary">rpsC</name>
    <name type="ordered locus">CBU_0244</name>
</gene>
<reference key="1">
    <citation type="journal article" date="2003" name="Proc. Natl. Acad. Sci. U.S.A.">
        <title>Complete genome sequence of the Q-fever pathogen, Coxiella burnetii.</title>
        <authorList>
            <person name="Seshadri R."/>
            <person name="Paulsen I.T."/>
            <person name="Eisen J.A."/>
            <person name="Read T.D."/>
            <person name="Nelson K.E."/>
            <person name="Nelson W.C."/>
            <person name="Ward N.L."/>
            <person name="Tettelin H."/>
            <person name="Davidsen T.M."/>
            <person name="Beanan M.J."/>
            <person name="DeBoy R.T."/>
            <person name="Daugherty S.C."/>
            <person name="Brinkac L.M."/>
            <person name="Madupu R."/>
            <person name="Dodson R.J."/>
            <person name="Khouri H.M."/>
            <person name="Lee K.H."/>
            <person name="Carty H.A."/>
            <person name="Scanlan D."/>
            <person name="Heinzen R.A."/>
            <person name="Thompson H.A."/>
            <person name="Samuel J.E."/>
            <person name="Fraser C.M."/>
            <person name="Heidelberg J.F."/>
        </authorList>
    </citation>
    <scope>NUCLEOTIDE SEQUENCE [LARGE SCALE GENOMIC DNA]</scope>
    <source>
        <strain>RSA 493 / Nine Mile phase I</strain>
    </source>
</reference>
<reference key="2">
    <citation type="journal article" date="1998" name="J. Bacteriol.">
        <title>Physical and genetic map of the obligate intracellular bacterium Coxiella burnetii.</title>
        <authorList>
            <person name="Willems H."/>
            <person name="Jaeger C."/>
            <person name="Baljer G."/>
        </authorList>
    </citation>
    <scope>NUCLEOTIDE SEQUENCE [GENOMIC DNA] OF 1-74</scope>
    <source>
        <strain>RSA 493 / Nine Mile phase I</strain>
    </source>
</reference>
<proteinExistence type="inferred from homology"/>
<keyword id="KW-1185">Reference proteome</keyword>
<keyword id="KW-0687">Ribonucleoprotein</keyword>
<keyword id="KW-0689">Ribosomal protein</keyword>
<keyword id="KW-0694">RNA-binding</keyword>
<keyword id="KW-0699">rRNA-binding</keyword>
<feature type="chain" id="PRO_0000130109" description="Small ribosomal subunit protein uS3">
    <location>
        <begin position="1"/>
        <end position="227"/>
    </location>
</feature>
<feature type="domain" description="KH type-2">
    <location>
        <begin position="39"/>
        <end position="107"/>
    </location>
</feature>
<feature type="sequence conflict" description="In Ref. 2; AAD09929." evidence="2" ref="2">
    <original>P</original>
    <variation>T</variation>
    <location>
        <position position="60"/>
    </location>
</feature>
<feature type="sequence conflict" description="In Ref. 2; AAD09929." evidence="2" ref="2">
    <original>IHSARPG</original>
    <variation>NPFLLRP</variation>
    <location>
        <begin position="68"/>
        <end position="74"/>
    </location>
</feature>
<name>RS3_COXBU</name>
<dbReference type="EMBL" id="AE016828">
    <property type="protein sequence ID" value="AAO89802.1"/>
    <property type="molecule type" value="Genomic_DNA"/>
</dbReference>
<dbReference type="EMBL" id="AF064946">
    <property type="protein sequence ID" value="AAD09929.1"/>
    <property type="molecule type" value="Genomic_DNA"/>
</dbReference>
<dbReference type="RefSeq" id="NP_819288.1">
    <property type="nucleotide sequence ID" value="NC_002971.4"/>
</dbReference>
<dbReference type="RefSeq" id="WP_010957458.1">
    <property type="nucleotide sequence ID" value="NC_002971.4"/>
</dbReference>
<dbReference type="SMR" id="O85388"/>
<dbReference type="STRING" id="227377.CBU_0244"/>
<dbReference type="DNASU" id="1208125"/>
<dbReference type="EnsemblBacteria" id="AAO89802">
    <property type="protein sequence ID" value="AAO89802"/>
    <property type="gene ID" value="CBU_0244"/>
</dbReference>
<dbReference type="GeneID" id="1208125"/>
<dbReference type="KEGG" id="cbu:CBU_0244"/>
<dbReference type="PATRIC" id="fig|227377.7.peg.239"/>
<dbReference type="eggNOG" id="COG0092">
    <property type="taxonomic scope" value="Bacteria"/>
</dbReference>
<dbReference type="HOGENOM" id="CLU_058591_0_2_6"/>
<dbReference type="OrthoDB" id="9806396at2"/>
<dbReference type="Proteomes" id="UP000002671">
    <property type="component" value="Chromosome"/>
</dbReference>
<dbReference type="GO" id="GO:0022627">
    <property type="term" value="C:cytosolic small ribosomal subunit"/>
    <property type="evidence" value="ECO:0000318"/>
    <property type="project" value="GO_Central"/>
</dbReference>
<dbReference type="GO" id="GO:0003729">
    <property type="term" value="F:mRNA binding"/>
    <property type="evidence" value="ECO:0007669"/>
    <property type="project" value="UniProtKB-UniRule"/>
</dbReference>
<dbReference type="GO" id="GO:0019843">
    <property type="term" value="F:rRNA binding"/>
    <property type="evidence" value="ECO:0007669"/>
    <property type="project" value="UniProtKB-UniRule"/>
</dbReference>
<dbReference type="GO" id="GO:0003735">
    <property type="term" value="F:structural constituent of ribosome"/>
    <property type="evidence" value="ECO:0000318"/>
    <property type="project" value="GO_Central"/>
</dbReference>
<dbReference type="GO" id="GO:0006412">
    <property type="term" value="P:translation"/>
    <property type="evidence" value="ECO:0007669"/>
    <property type="project" value="UniProtKB-UniRule"/>
</dbReference>
<dbReference type="CDD" id="cd02412">
    <property type="entry name" value="KH-II_30S_S3"/>
    <property type="match status" value="1"/>
</dbReference>
<dbReference type="FunFam" id="3.30.1140.32:FF:000001">
    <property type="entry name" value="30S ribosomal protein S3"/>
    <property type="match status" value="1"/>
</dbReference>
<dbReference type="FunFam" id="3.30.300.20:FF:000001">
    <property type="entry name" value="30S ribosomal protein S3"/>
    <property type="match status" value="1"/>
</dbReference>
<dbReference type="Gene3D" id="3.30.300.20">
    <property type="match status" value="1"/>
</dbReference>
<dbReference type="Gene3D" id="3.30.1140.32">
    <property type="entry name" value="Ribosomal protein S3, C-terminal domain"/>
    <property type="match status" value="1"/>
</dbReference>
<dbReference type="HAMAP" id="MF_01309_B">
    <property type="entry name" value="Ribosomal_uS3_B"/>
    <property type="match status" value="1"/>
</dbReference>
<dbReference type="InterPro" id="IPR004087">
    <property type="entry name" value="KH_dom"/>
</dbReference>
<dbReference type="InterPro" id="IPR015946">
    <property type="entry name" value="KH_dom-like_a/b"/>
</dbReference>
<dbReference type="InterPro" id="IPR004044">
    <property type="entry name" value="KH_dom_type_2"/>
</dbReference>
<dbReference type="InterPro" id="IPR009019">
    <property type="entry name" value="KH_sf_prok-type"/>
</dbReference>
<dbReference type="InterPro" id="IPR036419">
    <property type="entry name" value="Ribosomal_S3_C_sf"/>
</dbReference>
<dbReference type="InterPro" id="IPR005704">
    <property type="entry name" value="Ribosomal_uS3_bac-typ"/>
</dbReference>
<dbReference type="InterPro" id="IPR001351">
    <property type="entry name" value="Ribosomal_uS3_C"/>
</dbReference>
<dbReference type="InterPro" id="IPR018280">
    <property type="entry name" value="Ribosomal_uS3_CS"/>
</dbReference>
<dbReference type="NCBIfam" id="TIGR01009">
    <property type="entry name" value="rpsC_bact"/>
    <property type="match status" value="1"/>
</dbReference>
<dbReference type="PANTHER" id="PTHR11760">
    <property type="entry name" value="30S/40S RIBOSOMAL PROTEIN S3"/>
    <property type="match status" value="1"/>
</dbReference>
<dbReference type="PANTHER" id="PTHR11760:SF19">
    <property type="entry name" value="SMALL RIBOSOMAL SUBUNIT PROTEIN US3C"/>
    <property type="match status" value="1"/>
</dbReference>
<dbReference type="Pfam" id="PF07650">
    <property type="entry name" value="KH_2"/>
    <property type="match status" value="1"/>
</dbReference>
<dbReference type="Pfam" id="PF00189">
    <property type="entry name" value="Ribosomal_S3_C"/>
    <property type="match status" value="1"/>
</dbReference>
<dbReference type="SMART" id="SM00322">
    <property type="entry name" value="KH"/>
    <property type="match status" value="1"/>
</dbReference>
<dbReference type="SUPFAM" id="SSF54814">
    <property type="entry name" value="Prokaryotic type KH domain (KH-domain type II)"/>
    <property type="match status" value="1"/>
</dbReference>
<dbReference type="SUPFAM" id="SSF54821">
    <property type="entry name" value="Ribosomal protein S3 C-terminal domain"/>
    <property type="match status" value="1"/>
</dbReference>
<dbReference type="PROSITE" id="PS50823">
    <property type="entry name" value="KH_TYPE_2"/>
    <property type="match status" value="1"/>
</dbReference>
<dbReference type="PROSITE" id="PS00548">
    <property type="entry name" value="RIBOSOMAL_S3"/>
    <property type="match status" value="1"/>
</dbReference>
<evidence type="ECO:0000250" key="1"/>
<evidence type="ECO:0000305" key="2"/>
<comment type="function">
    <text evidence="1">Binds the lower part of the 30S subunit head. Binds mRNA in the 70S ribosome, positioning it for translation (By similarity).</text>
</comment>
<comment type="subunit">
    <text evidence="1">Part of the 30S ribosomal subunit. Forms a tight complex with proteins S10 and S14 (By similarity).</text>
</comment>
<comment type="similarity">
    <text evidence="2">Belongs to the universal ribosomal protein uS3 family.</text>
</comment>
<protein>
    <recommendedName>
        <fullName evidence="2">Small ribosomal subunit protein uS3</fullName>
    </recommendedName>
    <alternativeName>
        <fullName>30S ribosomal protein S3</fullName>
    </alternativeName>
</protein>